<protein>
    <recommendedName>
        <fullName evidence="1">Pole-localizer protein TmaR</fullName>
    </recommendedName>
</protein>
<gene>
    <name evidence="1" type="primary">tmaR</name>
    <name type="ordered locus">YE2755</name>
</gene>
<comment type="function">
    <text evidence="1">Pole-localizer protein involved in the regulation of several cellular processes.</text>
</comment>
<comment type="subcellular location">
    <subcellularLocation>
        <location evidence="1">Cytoplasm</location>
    </subcellularLocation>
</comment>
<comment type="similarity">
    <text evidence="1">Belongs to the pole-localizer TmaR family.</text>
</comment>
<proteinExistence type="inferred from homology"/>
<keyword id="KW-0175">Coiled coil</keyword>
<keyword id="KW-0963">Cytoplasm</keyword>
<feature type="chain" id="PRO_1000044939" description="Pole-localizer protein TmaR">
    <location>
        <begin position="1"/>
        <end position="105"/>
    </location>
</feature>
<feature type="coiled-coil region" evidence="1">
    <location>
        <begin position="22"/>
        <end position="42"/>
    </location>
</feature>
<feature type="coiled-coil region" evidence="1">
    <location>
        <begin position="70"/>
        <end position="104"/>
    </location>
</feature>
<name>TMAR_YERE8</name>
<accession>A1JTU7</accession>
<organism>
    <name type="scientific">Yersinia enterocolitica serotype O:8 / biotype 1B (strain NCTC 13174 / 8081)</name>
    <dbReference type="NCBI Taxonomy" id="393305"/>
    <lineage>
        <taxon>Bacteria</taxon>
        <taxon>Pseudomonadati</taxon>
        <taxon>Pseudomonadota</taxon>
        <taxon>Gammaproteobacteria</taxon>
        <taxon>Enterobacterales</taxon>
        <taxon>Yersiniaceae</taxon>
        <taxon>Yersinia</taxon>
    </lineage>
</organism>
<dbReference type="EMBL" id="AM286415">
    <property type="protein sequence ID" value="CAL12789.1"/>
    <property type="molecule type" value="Genomic_DNA"/>
</dbReference>
<dbReference type="RefSeq" id="YP_001006946.1">
    <property type="nucleotide sequence ID" value="NC_008800.1"/>
</dbReference>
<dbReference type="SMR" id="A1JTU7"/>
<dbReference type="KEGG" id="yen:YE2755"/>
<dbReference type="PATRIC" id="fig|393305.7.peg.2928"/>
<dbReference type="eggNOG" id="COG2926">
    <property type="taxonomic scope" value="Bacteria"/>
</dbReference>
<dbReference type="HOGENOM" id="CLU_153146_0_0_6"/>
<dbReference type="OrthoDB" id="90485at2"/>
<dbReference type="Proteomes" id="UP000000642">
    <property type="component" value="Chromosome"/>
</dbReference>
<dbReference type="GO" id="GO:0005829">
    <property type="term" value="C:cytosol"/>
    <property type="evidence" value="ECO:0007669"/>
    <property type="project" value="TreeGrafter"/>
</dbReference>
<dbReference type="HAMAP" id="MF_00683">
    <property type="entry name" value="Pole_loc_TmaR"/>
    <property type="match status" value="1"/>
</dbReference>
<dbReference type="InterPro" id="IPR007458">
    <property type="entry name" value="DUF496"/>
</dbReference>
<dbReference type="InterPro" id="IPR053375">
    <property type="entry name" value="UPF0265"/>
</dbReference>
<dbReference type="NCBIfam" id="NF003844">
    <property type="entry name" value="PRK05423.1"/>
    <property type="match status" value="1"/>
</dbReference>
<dbReference type="NCBIfam" id="NF040881">
    <property type="entry name" value="PTS_reg_TmaR"/>
    <property type="match status" value="1"/>
</dbReference>
<dbReference type="PANTHER" id="PTHR39591">
    <property type="entry name" value="UPF0265 PROTEIN YEEX"/>
    <property type="match status" value="1"/>
</dbReference>
<dbReference type="PANTHER" id="PTHR39591:SF1">
    <property type="entry name" value="UPF0265 PROTEIN YEEX"/>
    <property type="match status" value="1"/>
</dbReference>
<dbReference type="Pfam" id="PF04363">
    <property type="entry name" value="DUF496"/>
    <property type="match status" value="1"/>
</dbReference>
<dbReference type="PIRSF" id="PIRSF028773">
    <property type="entry name" value="UCP028773"/>
    <property type="match status" value="1"/>
</dbReference>
<reference key="1">
    <citation type="journal article" date="2006" name="PLoS Genet.">
        <title>The complete genome sequence and comparative genome analysis of the high pathogenicity Yersinia enterocolitica strain 8081.</title>
        <authorList>
            <person name="Thomson N.R."/>
            <person name="Howard S."/>
            <person name="Wren B.W."/>
            <person name="Holden M.T.G."/>
            <person name="Crossman L."/>
            <person name="Challis G.L."/>
            <person name="Churcher C."/>
            <person name="Mungall K."/>
            <person name="Brooks K."/>
            <person name="Chillingworth T."/>
            <person name="Feltwell T."/>
            <person name="Abdellah Z."/>
            <person name="Hauser H."/>
            <person name="Jagels K."/>
            <person name="Maddison M."/>
            <person name="Moule S."/>
            <person name="Sanders M."/>
            <person name="Whitehead S."/>
            <person name="Quail M.A."/>
            <person name="Dougan G."/>
            <person name="Parkhill J."/>
            <person name="Prentice M.B."/>
        </authorList>
    </citation>
    <scope>NUCLEOTIDE SEQUENCE [LARGE SCALE GENOMIC DNA]</scope>
    <source>
        <strain>NCTC 13174 / 8081</strain>
    </source>
</reference>
<evidence type="ECO:0000255" key="1">
    <source>
        <dbReference type="HAMAP-Rule" id="MF_00683"/>
    </source>
</evidence>
<sequence>MDNASKPTFQDVLEFVRMFRRKNKLQREIVDNEKKIRDNQKRVLLLDNLSEYIKPGMSIEEVQAIIANMRVDYEDRVDEYIIKNADLSKERRELSKKLKAMGEVK</sequence>